<organism>
    <name type="scientific">Bos taurus</name>
    <name type="common">Bovine</name>
    <dbReference type="NCBI Taxonomy" id="9913"/>
    <lineage>
        <taxon>Eukaryota</taxon>
        <taxon>Metazoa</taxon>
        <taxon>Chordata</taxon>
        <taxon>Craniata</taxon>
        <taxon>Vertebrata</taxon>
        <taxon>Euteleostomi</taxon>
        <taxon>Mammalia</taxon>
        <taxon>Eutheria</taxon>
        <taxon>Laurasiatheria</taxon>
        <taxon>Artiodactyla</taxon>
        <taxon>Ruminantia</taxon>
        <taxon>Pecora</taxon>
        <taxon>Bovidae</taxon>
        <taxon>Bovinae</taxon>
        <taxon>Bos</taxon>
    </lineage>
</organism>
<keyword id="KW-0007">Acetylation</keyword>
<keyword id="KW-0489">Methyltransferase</keyword>
<keyword id="KW-1185">Reference proteome</keyword>
<keyword id="KW-0949">S-adenosyl-L-methionine</keyword>
<keyword id="KW-0808">Transferase</keyword>
<protein>
    <recommendedName>
        <fullName>Guanidinoacetate N-methyltransferase</fullName>
        <ecNumber>2.1.1.2</ecNumber>
    </recommendedName>
</protein>
<reference key="1">
    <citation type="submission" date="2005-11" db="EMBL/GenBank/DDBJ databases">
        <authorList>
            <consortium name="NIH - Mammalian Gene Collection (MGC) project"/>
        </authorList>
    </citation>
    <scope>NUCLEOTIDE SEQUENCE [LARGE SCALE MRNA]</scope>
    <source>
        <strain>Crossbred X Angus</strain>
        <tissue>Liver</tissue>
    </source>
</reference>
<proteinExistence type="evidence at transcript level"/>
<feature type="initiator methionine" description="Removed" evidence="3">
    <location>
        <position position="1"/>
    </location>
</feature>
<feature type="chain" id="PRO_0000228964" description="Guanidinoacetate N-methyltransferase">
    <location>
        <begin position="2"/>
        <end position="236"/>
    </location>
</feature>
<feature type="domain" description="RMT2" evidence="4">
    <location>
        <begin position="13"/>
        <end position="236"/>
    </location>
</feature>
<feature type="binding site" evidence="4">
    <location>
        <position position="20"/>
    </location>
    <ligand>
        <name>S-adenosyl-L-methionine</name>
        <dbReference type="ChEBI" id="CHEBI:59789"/>
    </ligand>
</feature>
<feature type="binding site" evidence="2 4">
    <location>
        <position position="42"/>
    </location>
    <ligand>
        <name>guanidinoacetate</name>
        <dbReference type="ChEBI" id="CHEBI:57742"/>
    </ligand>
</feature>
<feature type="binding site" evidence="2 4">
    <location>
        <position position="46"/>
    </location>
    <ligand>
        <name>guanidinoacetate</name>
        <dbReference type="ChEBI" id="CHEBI:57742"/>
    </ligand>
</feature>
<feature type="binding site" evidence="4">
    <location>
        <position position="50"/>
    </location>
    <ligand>
        <name>S-adenosyl-L-methionine</name>
        <dbReference type="ChEBI" id="CHEBI:59789"/>
    </ligand>
</feature>
<feature type="binding site" evidence="4">
    <location>
        <begin position="69"/>
        <end position="74"/>
    </location>
    <ligand>
        <name>S-adenosyl-L-methionine</name>
        <dbReference type="ChEBI" id="CHEBI:59789"/>
    </ligand>
</feature>
<feature type="binding site" evidence="4">
    <location>
        <begin position="90"/>
        <end position="92"/>
    </location>
    <ligand>
        <name>S-adenosyl-L-methionine</name>
        <dbReference type="ChEBI" id="CHEBI:59789"/>
    </ligand>
</feature>
<feature type="binding site" evidence="4">
    <location>
        <begin position="117"/>
        <end position="118"/>
    </location>
    <ligand>
        <name>S-adenosyl-L-methionine</name>
        <dbReference type="ChEBI" id="CHEBI:59789"/>
    </ligand>
</feature>
<feature type="binding site" evidence="2">
    <location>
        <position position="135"/>
    </location>
    <ligand>
        <name>guanidinoacetate</name>
        <dbReference type="ChEBI" id="CHEBI:57742"/>
    </ligand>
</feature>
<feature type="binding site" evidence="4">
    <location>
        <position position="135"/>
    </location>
    <ligand>
        <name>S-adenosyl-L-methionine</name>
        <dbReference type="ChEBI" id="CHEBI:59789"/>
    </ligand>
</feature>
<feature type="binding site" evidence="2">
    <location>
        <begin position="171"/>
        <end position="172"/>
    </location>
    <ligand>
        <name>guanidinoacetate</name>
        <dbReference type="ChEBI" id="CHEBI:57742"/>
    </ligand>
</feature>
<feature type="modified residue" description="N-acetylserine" evidence="3">
    <location>
        <position position="2"/>
    </location>
</feature>
<evidence type="ECO:0000250" key="1"/>
<evidence type="ECO:0000250" key="2">
    <source>
        <dbReference type="UniProtKB" id="P10868"/>
    </source>
</evidence>
<evidence type="ECO:0000250" key="3">
    <source>
        <dbReference type="UniProtKB" id="Q14353"/>
    </source>
</evidence>
<evidence type="ECO:0000255" key="4">
    <source>
        <dbReference type="PROSITE-ProRule" id="PRU00892"/>
    </source>
</evidence>
<accession>Q2TBQ3</accession>
<comment type="function">
    <text evidence="3">Converts guanidinoacetate to creatine, using S-adenosylmethionine as the methyl donor. Important in nervous system development.</text>
</comment>
<comment type="catalytic activity">
    <reaction evidence="4">
        <text>guanidinoacetate + S-adenosyl-L-methionine = creatine + S-adenosyl-L-homocysteine + H(+)</text>
        <dbReference type="Rhea" id="RHEA:10656"/>
        <dbReference type="ChEBI" id="CHEBI:15378"/>
        <dbReference type="ChEBI" id="CHEBI:57742"/>
        <dbReference type="ChEBI" id="CHEBI:57856"/>
        <dbReference type="ChEBI" id="CHEBI:57947"/>
        <dbReference type="ChEBI" id="CHEBI:59789"/>
        <dbReference type="EC" id="2.1.1.2"/>
    </reaction>
</comment>
<comment type="pathway">
    <text>Amine and polyamine biosynthesis; creatine biosynthesis; creatine from L-arginine and glycine: step 2/2.</text>
</comment>
<comment type="subunit">
    <text evidence="1">Monomer.</text>
</comment>
<comment type="similarity">
    <text evidence="4">Belongs to the class I-like SAM-binding methyltransferase superfamily. RMT2 methyltransferase family.</text>
</comment>
<sequence length="236" mass="26610">MSAPAATPIFAPGENCSPAWRAAPAAYDASDTHLQILGKPVMERWETPYMHALAAAAASRGGRVLEVGFGMAIAATKVQEAPIEEHWIIECNEGVFQRLQDWALQQPHKVVPLKGLWEEVAPTLPDSHFDGILYDTYPLSEETWHTHQFNFIRDHAFRLLKPGGVLTYCNLTSWGELMKTKYSDITTMFEETQVPALLEAGFRRDNIRTQVMELVPPANCRYYAFPRMITPLVTKH</sequence>
<gene>
    <name type="primary">GAMT</name>
</gene>
<dbReference type="EC" id="2.1.1.2"/>
<dbReference type="EMBL" id="BC109825">
    <property type="protein sequence ID" value="AAI09826.1"/>
    <property type="molecule type" value="mRNA"/>
</dbReference>
<dbReference type="RefSeq" id="NP_001033633.1">
    <property type="nucleotide sequence ID" value="NM_001038544.2"/>
</dbReference>
<dbReference type="SMR" id="Q2TBQ3"/>
<dbReference type="FunCoup" id="Q2TBQ3">
    <property type="interactions" value="172"/>
</dbReference>
<dbReference type="STRING" id="9913.ENSBTAP00000005375"/>
<dbReference type="PaxDb" id="9913-ENSBTAP00000005375"/>
<dbReference type="PeptideAtlas" id="Q2TBQ3"/>
<dbReference type="Ensembl" id="ENSBTAT00000005375.5">
    <property type="protein sequence ID" value="ENSBTAP00000005375.3"/>
    <property type="gene ID" value="ENSBTAG00000004112.5"/>
</dbReference>
<dbReference type="GeneID" id="515270"/>
<dbReference type="KEGG" id="bta:515270"/>
<dbReference type="CTD" id="2593"/>
<dbReference type="VEuPathDB" id="HostDB:ENSBTAG00000004112"/>
<dbReference type="VGNC" id="VGNC:29243">
    <property type="gene designation" value="GAMT"/>
</dbReference>
<dbReference type="eggNOG" id="KOG1709">
    <property type="taxonomic scope" value="Eukaryota"/>
</dbReference>
<dbReference type="GeneTree" id="ENSGT00390000018061"/>
<dbReference type="HOGENOM" id="CLU_102800_0_0_1"/>
<dbReference type="InParanoid" id="Q2TBQ3"/>
<dbReference type="OMA" id="HKMITPT"/>
<dbReference type="OrthoDB" id="19014at2759"/>
<dbReference type="TreeFam" id="TF328555"/>
<dbReference type="Reactome" id="R-BTA-71288">
    <property type="pathway name" value="Creatine metabolism"/>
</dbReference>
<dbReference type="UniPathway" id="UPA00104">
    <property type="reaction ID" value="UER00580"/>
</dbReference>
<dbReference type="Proteomes" id="UP000009136">
    <property type="component" value="Chromosome 7"/>
</dbReference>
<dbReference type="Bgee" id="ENSBTAG00000004112">
    <property type="expression patterns" value="Expressed in liver and 106 other cell types or tissues"/>
</dbReference>
<dbReference type="GO" id="GO:0005737">
    <property type="term" value="C:cytoplasm"/>
    <property type="evidence" value="ECO:0000318"/>
    <property type="project" value="GO_Central"/>
</dbReference>
<dbReference type="GO" id="GO:0005634">
    <property type="term" value="C:nucleus"/>
    <property type="evidence" value="ECO:0000318"/>
    <property type="project" value="GO_Central"/>
</dbReference>
<dbReference type="GO" id="GO:0030731">
    <property type="term" value="F:guanidinoacetate N-methyltransferase activity"/>
    <property type="evidence" value="ECO:0000250"/>
    <property type="project" value="UniProtKB"/>
</dbReference>
<dbReference type="GO" id="GO:0009887">
    <property type="term" value="P:animal organ morphogenesis"/>
    <property type="evidence" value="ECO:0007669"/>
    <property type="project" value="Ensembl"/>
</dbReference>
<dbReference type="GO" id="GO:0006601">
    <property type="term" value="P:creatine biosynthetic process"/>
    <property type="evidence" value="ECO:0000318"/>
    <property type="project" value="GO_Central"/>
</dbReference>
<dbReference type="GO" id="GO:0032259">
    <property type="term" value="P:methylation"/>
    <property type="evidence" value="ECO:0007669"/>
    <property type="project" value="UniProtKB-KW"/>
</dbReference>
<dbReference type="GO" id="GO:0040014">
    <property type="term" value="P:regulation of multicellular organism growth"/>
    <property type="evidence" value="ECO:0007669"/>
    <property type="project" value="Ensembl"/>
</dbReference>
<dbReference type="GO" id="GO:0007283">
    <property type="term" value="P:spermatogenesis"/>
    <property type="evidence" value="ECO:0007669"/>
    <property type="project" value="Ensembl"/>
</dbReference>
<dbReference type="CDD" id="cd02440">
    <property type="entry name" value="AdoMet_MTases"/>
    <property type="match status" value="1"/>
</dbReference>
<dbReference type="FunFam" id="3.40.50.150:FF:000096">
    <property type="entry name" value="Guanidinoacetate N-methyltransferase"/>
    <property type="match status" value="1"/>
</dbReference>
<dbReference type="Gene3D" id="3.40.50.150">
    <property type="entry name" value="Vaccinia Virus protein VP39"/>
    <property type="match status" value="1"/>
</dbReference>
<dbReference type="InterPro" id="IPR016550">
    <property type="entry name" value="GuanidinoAc_N-MeTrfase"/>
</dbReference>
<dbReference type="InterPro" id="IPR051038">
    <property type="entry name" value="RMT2/GAMT_Mtase"/>
</dbReference>
<dbReference type="InterPro" id="IPR026480">
    <property type="entry name" value="RMT2_dom"/>
</dbReference>
<dbReference type="InterPro" id="IPR029063">
    <property type="entry name" value="SAM-dependent_MTases_sf"/>
</dbReference>
<dbReference type="PANTHER" id="PTHR32379">
    <property type="entry name" value="GUANIDINOACETATE N-METHYLTRANSFERASE"/>
    <property type="match status" value="1"/>
</dbReference>
<dbReference type="PANTHER" id="PTHR32379:SF1">
    <property type="entry name" value="GUANIDINOACETATE N-METHYLTRANSFERASE"/>
    <property type="match status" value="1"/>
</dbReference>
<dbReference type="PIRSF" id="PIRSF009285">
    <property type="entry name" value="GAMT"/>
    <property type="match status" value="1"/>
</dbReference>
<dbReference type="SUPFAM" id="SSF53335">
    <property type="entry name" value="S-adenosyl-L-methionine-dependent methyltransferases"/>
    <property type="match status" value="1"/>
</dbReference>
<dbReference type="PROSITE" id="PS51559">
    <property type="entry name" value="SAM_RMT2"/>
    <property type="match status" value="1"/>
</dbReference>
<name>GAMT_BOVIN</name>